<name>H32_TETCU</name>
<reference key="1">
    <citation type="journal article" date="1990" name="Nucleic Acids Res.">
        <title>Characterization of the promoter region of Tetrahymena genes.</title>
        <authorList>
            <person name="Brunk C.F."/>
            <person name="Sadler L.A."/>
        </authorList>
    </citation>
    <scope>NUCLEOTIDE SEQUENCE [GENOMIC DNA]</scope>
</reference>
<reference key="2">
    <citation type="journal article" date="1990" name="J. Mol. Evol.">
        <title>Phylogenetic relationships among Tetrahymena species determined using the polymerase chain reaction.</title>
        <authorList>
            <person name="Brunk C.F."/>
            <person name="Kahn R.W."/>
            <person name="Sadler L.A."/>
        </authorList>
    </citation>
    <scope>NUCLEOTIDE SEQUENCE [GENOMIC DNA]</scope>
</reference>
<comment type="function">
    <text>Core component of nucleosome. Nucleosomes wrap and compact DNA into chromatin, limiting DNA accessibility to the cellular machineries which require DNA as a template. Histones thereby play a central role in transcription regulation, DNA repair, DNA replication and chromosomal stability. DNA accessibility is regulated via a complex set of post-translational modifications of histones, also called histone code, and nucleosome remodeling.</text>
</comment>
<comment type="subunit">
    <text>The nucleosome is a histone octamer containing two molecules each of H2A, H2B, H3 and H4 assembled in one H3-H4 heterotetramer and two H2A-H2B heterodimers. The octamer wraps approximately 147 bp of DNA.</text>
</comment>
<comment type="subcellular location">
    <subcellularLocation>
        <location evidence="1">Nucleus</location>
    </subcellularLocation>
    <subcellularLocation>
        <location evidence="1">Chromosome</location>
    </subcellularLocation>
</comment>
<comment type="similarity">
    <text evidence="3">Belongs to the histone H3 family.</text>
</comment>
<proteinExistence type="inferred from homology"/>
<organism>
    <name type="scientific">Tetrahymena caudata</name>
    <dbReference type="NCBI Taxonomy" id="5896"/>
    <lineage>
        <taxon>Eukaryota</taxon>
        <taxon>Sar</taxon>
        <taxon>Alveolata</taxon>
        <taxon>Ciliophora</taxon>
        <taxon>Intramacronucleata</taxon>
        <taxon>Oligohymenophorea</taxon>
        <taxon>Hymenostomatida</taxon>
        <taxon>Tetrahymenina</taxon>
        <taxon>Tetrahymenidae</taxon>
        <taxon>Tetrahymena</taxon>
    </lineage>
</organism>
<protein>
    <recommendedName>
        <fullName>Histone H3.2</fullName>
    </recommendedName>
</protein>
<sequence>MARTKQTARKSTGAKAPRKQLASKAARKSAPATGGIKKPHR</sequence>
<dbReference type="EMBL" id="X17131">
    <property type="protein sequence ID" value="CAA34996.1"/>
    <property type="molecule type" value="Genomic_DNA"/>
</dbReference>
<dbReference type="PIR" id="S10269">
    <property type="entry name" value="S10269"/>
</dbReference>
<dbReference type="GO" id="GO:0000786">
    <property type="term" value="C:nucleosome"/>
    <property type="evidence" value="ECO:0007669"/>
    <property type="project" value="UniProtKB-KW"/>
</dbReference>
<dbReference type="GO" id="GO:0005634">
    <property type="term" value="C:nucleus"/>
    <property type="evidence" value="ECO:0007669"/>
    <property type="project" value="UniProtKB-SubCell"/>
</dbReference>
<dbReference type="GO" id="GO:0003677">
    <property type="term" value="F:DNA binding"/>
    <property type="evidence" value="ECO:0007669"/>
    <property type="project" value="UniProtKB-KW"/>
</dbReference>
<dbReference type="GO" id="GO:0046982">
    <property type="term" value="F:protein heterodimerization activity"/>
    <property type="evidence" value="ECO:0007669"/>
    <property type="project" value="InterPro"/>
</dbReference>
<dbReference type="GO" id="GO:0030527">
    <property type="term" value="F:structural constituent of chromatin"/>
    <property type="evidence" value="ECO:0007669"/>
    <property type="project" value="InterPro"/>
</dbReference>
<dbReference type="Gene3D" id="1.10.20.10">
    <property type="entry name" value="Histone, subunit A"/>
    <property type="match status" value="1"/>
</dbReference>
<dbReference type="InterPro" id="IPR009072">
    <property type="entry name" value="Histone-fold"/>
</dbReference>
<dbReference type="InterPro" id="IPR000164">
    <property type="entry name" value="Histone_H3/CENP-A"/>
</dbReference>
<dbReference type="PANTHER" id="PTHR11426">
    <property type="entry name" value="HISTONE H3"/>
    <property type="match status" value="1"/>
</dbReference>
<dbReference type="PRINTS" id="PR00622">
    <property type="entry name" value="HISTONEH3"/>
</dbReference>
<dbReference type="SUPFAM" id="SSF47113">
    <property type="entry name" value="Histone-fold"/>
    <property type="match status" value="1"/>
</dbReference>
<dbReference type="PROSITE" id="PS00322">
    <property type="entry name" value="HISTONE_H3_1"/>
    <property type="match status" value="1"/>
</dbReference>
<accession>P69113</accession>
<accession>P17705</accession>
<keyword id="KW-0158">Chromosome</keyword>
<keyword id="KW-0238">DNA-binding</keyword>
<keyword id="KW-0544">Nucleosome core</keyword>
<keyword id="KW-0539">Nucleus</keyword>
<evidence type="ECO:0000250" key="1"/>
<evidence type="ECO:0000256" key="2">
    <source>
        <dbReference type="SAM" id="MobiDB-lite"/>
    </source>
</evidence>
<evidence type="ECO:0000305" key="3"/>
<feature type="initiator methionine" description="Removed" evidence="1">
    <location>
        <position position="1"/>
    </location>
</feature>
<feature type="chain" id="PRO_0000221335" description="Histone H3.2">
    <location>
        <begin position="2"/>
        <end position="41" status="greater than"/>
    </location>
</feature>
<feature type="region of interest" description="Disordered" evidence="2">
    <location>
        <begin position="1"/>
        <end position="41"/>
    </location>
</feature>
<feature type="non-terminal residue">
    <location>
        <position position="41"/>
    </location>
</feature>